<gene>
    <name evidence="1" type="primary">atpA2</name>
    <name type="ordered locus">BURPS1710b_A1048</name>
</gene>
<name>ATPA2_BURP1</name>
<feature type="chain" id="PRO_0000238222" description="ATP synthase subunit alpha 2">
    <location>
        <begin position="1"/>
        <end position="664"/>
    </location>
</feature>
<feature type="region of interest" description="Disordered" evidence="2">
    <location>
        <begin position="525"/>
        <end position="664"/>
    </location>
</feature>
<feature type="compositionally biased region" description="Basic and acidic residues" evidence="2">
    <location>
        <begin position="543"/>
        <end position="588"/>
    </location>
</feature>
<feature type="compositionally biased region" description="Low complexity" evidence="2">
    <location>
        <begin position="589"/>
        <end position="599"/>
    </location>
</feature>
<feature type="compositionally biased region" description="Basic and acidic residues" evidence="2">
    <location>
        <begin position="621"/>
        <end position="639"/>
    </location>
</feature>
<feature type="binding site" evidence="1">
    <location>
        <begin position="180"/>
        <end position="187"/>
    </location>
    <ligand>
        <name>ATP</name>
        <dbReference type="ChEBI" id="CHEBI:30616"/>
    </ligand>
</feature>
<feature type="site" description="Required for activity" evidence="1">
    <location>
        <position position="373"/>
    </location>
</feature>
<evidence type="ECO:0000255" key="1">
    <source>
        <dbReference type="HAMAP-Rule" id="MF_01346"/>
    </source>
</evidence>
<evidence type="ECO:0000256" key="2">
    <source>
        <dbReference type="SAM" id="MobiDB-lite"/>
    </source>
</evidence>
<accession>Q3JJP7</accession>
<protein>
    <recommendedName>
        <fullName evidence="1">ATP synthase subunit alpha 2</fullName>
        <ecNumber evidence="1">7.1.2.2</ecNumber>
    </recommendedName>
    <alternativeName>
        <fullName evidence="1">ATP synthase F1 sector subunit alpha 2</fullName>
    </alternativeName>
    <alternativeName>
        <fullName evidence="1">F-ATPase subunit alpha 2</fullName>
    </alternativeName>
</protein>
<reference key="1">
    <citation type="journal article" date="2010" name="Genome Biol. Evol.">
        <title>Continuing evolution of Burkholderia mallei through genome reduction and large-scale rearrangements.</title>
        <authorList>
            <person name="Losada L."/>
            <person name="Ronning C.M."/>
            <person name="DeShazer D."/>
            <person name="Woods D."/>
            <person name="Fedorova N."/>
            <person name="Kim H.S."/>
            <person name="Shabalina S.A."/>
            <person name="Pearson T.R."/>
            <person name="Brinkac L."/>
            <person name="Tan P."/>
            <person name="Nandi T."/>
            <person name="Crabtree J."/>
            <person name="Badger J."/>
            <person name="Beckstrom-Sternberg S."/>
            <person name="Saqib M."/>
            <person name="Schutzer S.E."/>
            <person name="Keim P."/>
            <person name="Nierman W.C."/>
        </authorList>
    </citation>
    <scope>NUCLEOTIDE SEQUENCE [LARGE SCALE GENOMIC DNA]</scope>
    <source>
        <strain>1710b</strain>
    </source>
</reference>
<sequence length="664" mass="69646">MTPTPDAPAAADAATGAGWLARRRGALARVALAPVAQAIGRVERVADGIAFVSGLEDTMLNEVLRFEGGVTGFAHTLDEDLISVVLLDPDAGVRAQTAVARTGAVLEVPAGPQLLGRVVDPLGRPLDGGAPLDAAHTLPIERAAPAIIERDLVSEPLDTGVLIVDALFTIGRGQRELIIGDRATGKTSLAIDAIVNQRHSDVICVYVAIGQRASAVRRVIDAVRRYGAPERCVFVVAPAACAPGLQWIAPFAGFSIAEYFRDRGQHALVVVDDLTKHAATHRELALLTREPPGREAYPGDIFYVHARLLERAAKLSAALGGGSLSALPIAETDAGNLAAYIPTNLISITDGQIVLDSALFAANQRPAVDVGLSVSRVGGKAQHPALRAASGRLRLDYAQFLELEAFTRFGGLTDARLRAQITRGERIRALITQPRFRALRTLDEVVLLKALAAGALDAMSPDLVAPLRERLPAWLDARIAALTPALAPPRDWLADDAALDALAESVGELIERIAADAARRATAGMPAEDAAGDIGGAFGGEQARGDADRDADHGANREVSREVSPEASREVSREVSCEVSHEADRDAAADAARVAGRAPGRAEPDRAAPRAMPDGPPRAQADGDRASASRPRPDARGDAARTAPSPQGGADANVDAEAEARHKR</sequence>
<comment type="function">
    <text evidence="1">Produces ATP from ADP in the presence of a proton gradient across the membrane. The alpha chain is a regulatory subunit.</text>
</comment>
<comment type="catalytic activity">
    <reaction evidence="1">
        <text>ATP + H2O + 4 H(+)(in) = ADP + phosphate + 5 H(+)(out)</text>
        <dbReference type="Rhea" id="RHEA:57720"/>
        <dbReference type="ChEBI" id="CHEBI:15377"/>
        <dbReference type="ChEBI" id="CHEBI:15378"/>
        <dbReference type="ChEBI" id="CHEBI:30616"/>
        <dbReference type="ChEBI" id="CHEBI:43474"/>
        <dbReference type="ChEBI" id="CHEBI:456216"/>
        <dbReference type="EC" id="7.1.2.2"/>
    </reaction>
</comment>
<comment type="subunit">
    <text evidence="1">F-type ATPases have 2 components, CF(1) - the catalytic core - and CF(0) - the membrane proton channel. CF(1) has five subunits: alpha(3), beta(3), gamma(1), delta(1), epsilon(1). CF(0) has three main subunits: a(1), b(2) and c(9-12). The alpha and beta chains form an alternating ring which encloses part of the gamma chain. CF(1) is attached to CF(0) by a central stalk formed by the gamma and epsilon chains, while a peripheral stalk is formed by the delta and b chains.</text>
</comment>
<comment type="subcellular location">
    <subcellularLocation>
        <location evidence="1">Cell inner membrane</location>
        <topology evidence="1">Peripheral membrane protein</topology>
    </subcellularLocation>
</comment>
<comment type="similarity">
    <text evidence="1">Belongs to the ATPase alpha/beta chains family.</text>
</comment>
<proteinExistence type="inferred from homology"/>
<keyword id="KW-0066">ATP synthesis</keyword>
<keyword id="KW-0067">ATP-binding</keyword>
<keyword id="KW-0997">Cell inner membrane</keyword>
<keyword id="KW-1003">Cell membrane</keyword>
<keyword id="KW-0139">CF(1)</keyword>
<keyword id="KW-0375">Hydrogen ion transport</keyword>
<keyword id="KW-0406">Ion transport</keyword>
<keyword id="KW-0472">Membrane</keyword>
<keyword id="KW-0547">Nucleotide-binding</keyword>
<keyword id="KW-1278">Translocase</keyword>
<keyword id="KW-0813">Transport</keyword>
<organism>
    <name type="scientific">Burkholderia pseudomallei (strain 1710b)</name>
    <dbReference type="NCBI Taxonomy" id="320372"/>
    <lineage>
        <taxon>Bacteria</taxon>
        <taxon>Pseudomonadati</taxon>
        <taxon>Pseudomonadota</taxon>
        <taxon>Betaproteobacteria</taxon>
        <taxon>Burkholderiales</taxon>
        <taxon>Burkholderiaceae</taxon>
        <taxon>Burkholderia</taxon>
        <taxon>pseudomallei group</taxon>
    </lineage>
</organism>
<dbReference type="EC" id="7.1.2.2" evidence="1"/>
<dbReference type="EMBL" id="CP000125">
    <property type="protein sequence ID" value="ABA53492.1"/>
    <property type="molecule type" value="Genomic_DNA"/>
</dbReference>
<dbReference type="RefSeq" id="WP_004529181.1">
    <property type="nucleotide sequence ID" value="NC_007435.1"/>
</dbReference>
<dbReference type="SMR" id="Q3JJP7"/>
<dbReference type="EnsemblBacteria" id="ABA53492">
    <property type="protein sequence ID" value="ABA53492"/>
    <property type="gene ID" value="BURPS1710b_A1048"/>
</dbReference>
<dbReference type="KEGG" id="bpm:BURPS1710b_A1048"/>
<dbReference type="HOGENOM" id="CLU_010091_4_0_4"/>
<dbReference type="Proteomes" id="UP000002700">
    <property type="component" value="Chromosome II"/>
</dbReference>
<dbReference type="GO" id="GO:0005886">
    <property type="term" value="C:plasma membrane"/>
    <property type="evidence" value="ECO:0007669"/>
    <property type="project" value="UniProtKB-SubCell"/>
</dbReference>
<dbReference type="GO" id="GO:0045259">
    <property type="term" value="C:proton-transporting ATP synthase complex"/>
    <property type="evidence" value="ECO:0007669"/>
    <property type="project" value="UniProtKB-KW"/>
</dbReference>
<dbReference type="GO" id="GO:0043531">
    <property type="term" value="F:ADP binding"/>
    <property type="evidence" value="ECO:0007669"/>
    <property type="project" value="TreeGrafter"/>
</dbReference>
<dbReference type="GO" id="GO:0005524">
    <property type="term" value="F:ATP binding"/>
    <property type="evidence" value="ECO:0007669"/>
    <property type="project" value="UniProtKB-UniRule"/>
</dbReference>
<dbReference type="GO" id="GO:0046933">
    <property type="term" value="F:proton-transporting ATP synthase activity, rotational mechanism"/>
    <property type="evidence" value="ECO:0007669"/>
    <property type="project" value="UniProtKB-UniRule"/>
</dbReference>
<dbReference type="CDD" id="cd18116">
    <property type="entry name" value="ATP-synt_F1_alpha_N"/>
    <property type="match status" value="1"/>
</dbReference>
<dbReference type="CDD" id="cd01132">
    <property type="entry name" value="F1-ATPase_alpha_CD"/>
    <property type="match status" value="1"/>
</dbReference>
<dbReference type="FunFam" id="3.40.50.300:FF:004039">
    <property type="entry name" value="ATP synthase subunit alpha, mitochondrial"/>
    <property type="match status" value="1"/>
</dbReference>
<dbReference type="Gene3D" id="2.40.30.20">
    <property type="match status" value="1"/>
</dbReference>
<dbReference type="Gene3D" id="1.20.150.20">
    <property type="entry name" value="ATP synthase alpha/beta chain, C-terminal domain"/>
    <property type="match status" value="1"/>
</dbReference>
<dbReference type="Gene3D" id="3.40.50.300">
    <property type="entry name" value="P-loop containing nucleotide triphosphate hydrolases"/>
    <property type="match status" value="1"/>
</dbReference>
<dbReference type="HAMAP" id="MF_01346">
    <property type="entry name" value="ATP_synth_alpha_bact"/>
    <property type="match status" value="1"/>
</dbReference>
<dbReference type="InterPro" id="IPR023366">
    <property type="entry name" value="ATP_synth_asu-like_sf"/>
</dbReference>
<dbReference type="InterPro" id="IPR000793">
    <property type="entry name" value="ATP_synth_asu_C"/>
</dbReference>
<dbReference type="InterPro" id="IPR038376">
    <property type="entry name" value="ATP_synth_asu_C_sf"/>
</dbReference>
<dbReference type="InterPro" id="IPR033732">
    <property type="entry name" value="ATP_synth_F1_a_nt-bd_dom"/>
</dbReference>
<dbReference type="InterPro" id="IPR005294">
    <property type="entry name" value="ATP_synth_F1_asu"/>
</dbReference>
<dbReference type="InterPro" id="IPR020003">
    <property type="entry name" value="ATPase_a/bsu_AS"/>
</dbReference>
<dbReference type="InterPro" id="IPR004100">
    <property type="entry name" value="ATPase_F1/V1/A1_a/bsu_N"/>
</dbReference>
<dbReference type="InterPro" id="IPR036121">
    <property type="entry name" value="ATPase_F1/V1/A1_a/bsu_N_sf"/>
</dbReference>
<dbReference type="InterPro" id="IPR000194">
    <property type="entry name" value="ATPase_F1/V1/A1_a/bsu_nucl-bd"/>
</dbReference>
<dbReference type="InterPro" id="IPR027417">
    <property type="entry name" value="P-loop_NTPase"/>
</dbReference>
<dbReference type="NCBIfam" id="TIGR00962">
    <property type="entry name" value="atpA"/>
    <property type="match status" value="1"/>
</dbReference>
<dbReference type="NCBIfam" id="NF009884">
    <property type="entry name" value="PRK13343.1"/>
    <property type="match status" value="1"/>
</dbReference>
<dbReference type="PANTHER" id="PTHR48082">
    <property type="entry name" value="ATP SYNTHASE SUBUNIT ALPHA, MITOCHONDRIAL"/>
    <property type="match status" value="1"/>
</dbReference>
<dbReference type="PANTHER" id="PTHR48082:SF2">
    <property type="entry name" value="ATP SYNTHASE SUBUNIT ALPHA, MITOCHONDRIAL"/>
    <property type="match status" value="1"/>
</dbReference>
<dbReference type="Pfam" id="PF00006">
    <property type="entry name" value="ATP-synt_ab"/>
    <property type="match status" value="1"/>
</dbReference>
<dbReference type="Pfam" id="PF00306">
    <property type="entry name" value="ATP-synt_ab_C"/>
    <property type="match status" value="1"/>
</dbReference>
<dbReference type="Pfam" id="PF02874">
    <property type="entry name" value="ATP-synt_ab_N"/>
    <property type="match status" value="1"/>
</dbReference>
<dbReference type="SUPFAM" id="SSF47917">
    <property type="entry name" value="C-terminal domain of alpha and beta subunits of F1 ATP synthase"/>
    <property type="match status" value="1"/>
</dbReference>
<dbReference type="SUPFAM" id="SSF50615">
    <property type="entry name" value="N-terminal domain of alpha and beta subunits of F1 ATP synthase"/>
    <property type="match status" value="1"/>
</dbReference>
<dbReference type="SUPFAM" id="SSF52540">
    <property type="entry name" value="P-loop containing nucleoside triphosphate hydrolases"/>
    <property type="match status" value="1"/>
</dbReference>
<dbReference type="PROSITE" id="PS00152">
    <property type="entry name" value="ATPASE_ALPHA_BETA"/>
    <property type="match status" value="1"/>
</dbReference>